<organism>
    <name type="scientific">Mannheimia succiniciproducens (strain KCTC 0769BP / MBEL55E)</name>
    <dbReference type="NCBI Taxonomy" id="221988"/>
    <lineage>
        <taxon>Bacteria</taxon>
        <taxon>Pseudomonadati</taxon>
        <taxon>Pseudomonadota</taxon>
        <taxon>Gammaproteobacteria</taxon>
        <taxon>Pasteurellales</taxon>
        <taxon>Pasteurellaceae</taxon>
        <taxon>Basfia</taxon>
    </lineage>
</organism>
<feature type="chain" id="PRO_0000237203" description="Large ribosomal subunit protein uL2">
    <location>
        <begin position="1"/>
        <end position="273"/>
    </location>
</feature>
<feature type="region of interest" description="Disordered" evidence="2">
    <location>
        <begin position="221"/>
        <end position="273"/>
    </location>
</feature>
<feature type="compositionally biased region" description="Basic residues" evidence="2">
    <location>
        <begin position="253"/>
        <end position="273"/>
    </location>
</feature>
<keyword id="KW-0687">Ribonucleoprotein</keyword>
<keyword id="KW-0689">Ribosomal protein</keyword>
<keyword id="KW-0694">RNA-binding</keyword>
<keyword id="KW-0699">rRNA-binding</keyword>
<sequence length="273" mass="30004">MAIVKCKPTSAGRRHVVKIVNPELHKGKPYAPLLDTKSKTGGRNNLGRITTRHIGGGHKQHYRLIDFKRNKLDIPAVVERLEYDPNRSANIALVLYKDGERRYILAPKGLSAGDQIQAGVNAPIKVGNALPMRNIPVGSTVHNVELKPGKGGQIARSAGSYVQIIAREGNYVTLRLRSGEMRKVLAECTATIGEVGNSEHMLRVLGKAGANRWRGVRPTVRGTAMNPVDHPHGGGEGRNFGKHPVSPWGVQTKGKKTRHNKRTDKYIVRRRGK</sequence>
<proteinExistence type="inferred from homology"/>
<comment type="function">
    <text evidence="1">One of the primary rRNA binding proteins. Required for association of the 30S and 50S subunits to form the 70S ribosome, for tRNA binding and peptide bond formation. It has been suggested to have peptidyltransferase activity; this is somewhat controversial. Makes several contacts with the 16S rRNA in the 70S ribosome.</text>
</comment>
<comment type="subunit">
    <text evidence="1">Part of the 50S ribosomal subunit. Forms a bridge to the 30S subunit in the 70S ribosome.</text>
</comment>
<comment type="similarity">
    <text evidence="1">Belongs to the universal ribosomal protein uL2 family.</text>
</comment>
<gene>
    <name evidence="1" type="primary">rplB</name>
    <name type="ordered locus">MS2045</name>
</gene>
<reference key="1">
    <citation type="journal article" date="2004" name="Nat. Biotechnol.">
        <title>The genome sequence of the capnophilic rumen bacterium Mannheimia succiniciproducens.</title>
        <authorList>
            <person name="Hong S.H."/>
            <person name="Kim J.S."/>
            <person name="Lee S.Y."/>
            <person name="In Y.H."/>
            <person name="Choi S.S."/>
            <person name="Rih J.-K."/>
            <person name="Kim C.H."/>
            <person name="Jeong H."/>
            <person name="Hur C.G."/>
            <person name="Kim J.J."/>
        </authorList>
    </citation>
    <scope>NUCLEOTIDE SEQUENCE [LARGE SCALE GENOMIC DNA]</scope>
    <source>
        <strain>KCTC 0769BP / MBEL55E</strain>
    </source>
</reference>
<protein>
    <recommendedName>
        <fullName evidence="1">Large ribosomal subunit protein uL2</fullName>
    </recommendedName>
    <alternativeName>
        <fullName evidence="3">50S ribosomal protein L2</fullName>
    </alternativeName>
</protein>
<dbReference type="EMBL" id="AE016827">
    <property type="protein sequence ID" value="AAU38652.1"/>
    <property type="molecule type" value="Genomic_DNA"/>
</dbReference>
<dbReference type="RefSeq" id="WP_011201201.1">
    <property type="nucleotide sequence ID" value="NC_006300.1"/>
</dbReference>
<dbReference type="SMR" id="Q65QV8"/>
<dbReference type="STRING" id="221988.MS2045"/>
<dbReference type="KEGG" id="msu:MS2045"/>
<dbReference type="eggNOG" id="COG0090">
    <property type="taxonomic scope" value="Bacteria"/>
</dbReference>
<dbReference type="HOGENOM" id="CLU_036235_2_1_6"/>
<dbReference type="OrthoDB" id="9778722at2"/>
<dbReference type="Proteomes" id="UP000000607">
    <property type="component" value="Chromosome"/>
</dbReference>
<dbReference type="GO" id="GO:0015934">
    <property type="term" value="C:large ribosomal subunit"/>
    <property type="evidence" value="ECO:0007669"/>
    <property type="project" value="InterPro"/>
</dbReference>
<dbReference type="GO" id="GO:0019843">
    <property type="term" value="F:rRNA binding"/>
    <property type="evidence" value="ECO:0007669"/>
    <property type="project" value="UniProtKB-UniRule"/>
</dbReference>
<dbReference type="GO" id="GO:0003735">
    <property type="term" value="F:structural constituent of ribosome"/>
    <property type="evidence" value="ECO:0007669"/>
    <property type="project" value="InterPro"/>
</dbReference>
<dbReference type="GO" id="GO:0016740">
    <property type="term" value="F:transferase activity"/>
    <property type="evidence" value="ECO:0007669"/>
    <property type="project" value="InterPro"/>
</dbReference>
<dbReference type="GO" id="GO:0002181">
    <property type="term" value="P:cytoplasmic translation"/>
    <property type="evidence" value="ECO:0007669"/>
    <property type="project" value="TreeGrafter"/>
</dbReference>
<dbReference type="FunFam" id="2.30.30.30:FF:000001">
    <property type="entry name" value="50S ribosomal protein L2"/>
    <property type="match status" value="1"/>
</dbReference>
<dbReference type="FunFam" id="2.40.50.140:FF:000003">
    <property type="entry name" value="50S ribosomal protein L2"/>
    <property type="match status" value="1"/>
</dbReference>
<dbReference type="FunFam" id="4.10.950.10:FF:000001">
    <property type="entry name" value="50S ribosomal protein L2"/>
    <property type="match status" value="1"/>
</dbReference>
<dbReference type="Gene3D" id="2.30.30.30">
    <property type="match status" value="1"/>
</dbReference>
<dbReference type="Gene3D" id="2.40.50.140">
    <property type="entry name" value="Nucleic acid-binding proteins"/>
    <property type="match status" value="1"/>
</dbReference>
<dbReference type="Gene3D" id="4.10.950.10">
    <property type="entry name" value="Ribosomal protein L2, domain 3"/>
    <property type="match status" value="1"/>
</dbReference>
<dbReference type="HAMAP" id="MF_01320_B">
    <property type="entry name" value="Ribosomal_uL2_B"/>
    <property type="match status" value="1"/>
</dbReference>
<dbReference type="InterPro" id="IPR012340">
    <property type="entry name" value="NA-bd_OB-fold"/>
</dbReference>
<dbReference type="InterPro" id="IPR014722">
    <property type="entry name" value="Rib_uL2_dom2"/>
</dbReference>
<dbReference type="InterPro" id="IPR002171">
    <property type="entry name" value="Ribosomal_uL2"/>
</dbReference>
<dbReference type="InterPro" id="IPR005880">
    <property type="entry name" value="Ribosomal_uL2_bac/org-type"/>
</dbReference>
<dbReference type="InterPro" id="IPR022669">
    <property type="entry name" value="Ribosomal_uL2_C"/>
</dbReference>
<dbReference type="InterPro" id="IPR022671">
    <property type="entry name" value="Ribosomal_uL2_CS"/>
</dbReference>
<dbReference type="InterPro" id="IPR014726">
    <property type="entry name" value="Ribosomal_uL2_dom3"/>
</dbReference>
<dbReference type="InterPro" id="IPR022666">
    <property type="entry name" value="Ribosomal_uL2_RNA-bd_dom"/>
</dbReference>
<dbReference type="InterPro" id="IPR008991">
    <property type="entry name" value="Translation_prot_SH3-like_sf"/>
</dbReference>
<dbReference type="NCBIfam" id="TIGR01171">
    <property type="entry name" value="rplB_bact"/>
    <property type="match status" value="1"/>
</dbReference>
<dbReference type="PANTHER" id="PTHR13691:SF5">
    <property type="entry name" value="LARGE RIBOSOMAL SUBUNIT PROTEIN UL2M"/>
    <property type="match status" value="1"/>
</dbReference>
<dbReference type="PANTHER" id="PTHR13691">
    <property type="entry name" value="RIBOSOMAL PROTEIN L2"/>
    <property type="match status" value="1"/>
</dbReference>
<dbReference type="Pfam" id="PF00181">
    <property type="entry name" value="Ribosomal_L2"/>
    <property type="match status" value="1"/>
</dbReference>
<dbReference type="Pfam" id="PF03947">
    <property type="entry name" value="Ribosomal_L2_C"/>
    <property type="match status" value="1"/>
</dbReference>
<dbReference type="PIRSF" id="PIRSF002158">
    <property type="entry name" value="Ribosomal_L2"/>
    <property type="match status" value="1"/>
</dbReference>
<dbReference type="SMART" id="SM01383">
    <property type="entry name" value="Ribosomal_L2"/>
    <property type="match status" value="1"/>
</dbReference>
<dbReference type="SMART" id="SM01382">
    <property type="entry name" value="Ribosomal_L2_C"/>
    <property type="match status" value="1"/>
</dbReference>
<dbReference type="SUPFAM" id="SSF50249">
    <property type="entry name" value="Nucleic acid-binding proteins"/>
    <property type="match status" value="1"/>
</dbReference>
<dbReference type="SUPFAM" id="SSF50104">
    <property type="entry name" value="Translation proteins SH3-like domain"/>
    <property type="match status" value="1"/>
</dbReference>
<dbReference type="PROSITE" id="PS00467">
    <property type="entry name" value="RIBOSOMAL_L2"/>
    <property type="match status" value="1"/>
</dbReference>
<name>RL2_MANSM</name>
<evidence type="ECO:0000255" key="1">
    <source>
        <dbReference type="HAMAP-Rule" id="MF_01320"/>
    </source>
</evidence>
<evidence type="ECO:0000256" key="2">
    <source>
        <dbReference type="SAM" id="MobiDB-lite"/>
    </source>
</evidence>
<evidence type="ECO:0000305" key="3"/>
<accession>Q65QV8</accession>